<keyword id="KW-0210">Decarboxylase</keyword>
<keyword id="KW-0456">Lyase</keyword>
<keyword id="KW-0665">Pyrimidine biosynthesis</keyword>
<keyword id="KW-1185">Reference proteome</keyword>
<name>PYRF_PROM4</name>
<dbReference type="EC" id="4.1.1.23" evidence="1"/>
<dbReference type="EMBL" id="CP000878">
    <property type="protein sequence ID" value="ABX09313.1"/>
    <property type="molecule type" value="Genomic_DNA"/>
</dbReference>
<dbReference type="RefSeq" id="WP_012195934.1">
    <property type="nucleotide sequence ID" value="NC_009976.1"/>
</dbReference>
<dbReference type="SMR" id="A9BBV1"/>
<dbReference type="STRING" id="93059.P9211_13821"/>
<dbReference type="KEGG" id="pmj:P9211_13821"/>
<dbReference type="eggNOG" id="COG0284">
    <property type="taxonomic scope" value="Bacteria"/>
</dbReference>
<dbReference type="HOGENOM" id="CLU_067069_1_0_3"/>
<dbReference type="OrthoDB" id="9806203at2"/>
<dbReference type="UniPathway" id="UPA00070">
    <property type="reaction ID" value="UER00120"/>
</dbReference>
<dbReference type="Proteomes" id="UP000000788">
    <property type="component" value="Chromosome"/>
</dbReference>
<dbReference type="GO" id="GO:0005829">
    <property type="term" value="C:cytosol"/>
    <property type="evidence" value="ECO:0007669"/>
    <property type="project" value="TreeGrafter"/>
</dbReference>
<dbReference type="GO" id="GO:0004590">
    <property type="term" value="F:orotidine-5'-phosphate decarboxylase activity"/>
    <property type="evidence" value="ECO:0007669"/>
    <property type="project" value="UniProtKB-UniRule"/>
</dbReference>
<dbReference type="GO" id="GO:0006207">
    <property type="term" value="P:'de novo' pyrimidine nucleobase biosynthetic process"/>
    <property type="evidence" value="ECO:0007669"/>
    <property type="project" value="InterPro"/>
</dbReference>
<dbReference type="GO" id="GO:0044205">
    <property type="term" value="P:'de novo' UMP biosynthetic process"/>
    <property type="evidence" value="ECO:0007669"/>
    <property type="project" value="UniProtKB-UniRule"/>
</dbReference>
<dbReference type="CDD" id="cd04725">
    <property type="entry name" value="OMP_decarboxylase_like"/>
    <property type="match status" value="1"/>
</dbReference>
<dbReference type="Gene3D" id="3.20.20.70">
    <property type="entry name" value="Aldolase class I"/>
    <property type="match status" value="1"/>
</dbReference>
<dbReference type="HAMAP" id="MF_01200_B">
    <property type="entry name" value="OMPdecase_type1_B"/>
    <property type="match status" value="1"/>
</dbReference>
<dbReference type="InterPro" id="IPR013785">
    <property type="entry name" value="Aldolase_TIM"/>
</dbReference>
<dbReference type="InterPro" id="IPR014732">
    <property type="entry name" value="OMPdecase"/>
</dbReference>
<dbReference type="InterPro" id="IPR018089">
    <property type="entry name" value="OMPdecase_AS"/>
</dbReference>
<dbReference type="InterPro" id="IPR047596">
    <property type="entry name" value="OMPdecase_bac"/>
</dbReference>
<dbReference type="InterPro" id="IPR001754">
    <property type="entry name" value="OMPdeCOase_dom"/>
</dbReference>
<dbReference type="InterPro" id="IPR011060">
    <property type="entry name" value="RibuloseP-bd_barrel"/>
</dbReference>
<dbReference type="NCBIfam" id="NF001273">
    <property type="entry name" value="PRK00230.1"/>
    <property type="match status" value="1"/>
</dbReference>
<dbReference type="NCBIfam" id="TIGR01740">
    <property type="entry name" value="pyrF"/>
    <property type="match status" value="1"/>
</dbReference>
<dbReference type="PANTHER" id="PTHR32119">
    <property type="entry name" value="OROTIDINE 5'-PHOSPHATE DECARBOXYLASE"/>
    <property type="match status" value="1"/>
</dbReference>
<dbReference type="PANTHER" id="PTHR32119:SF2">
    <property type="entry name" value="OROTIDINE 5'-PHOSPHATE DECARBOXYLASE"/>
    <property type="match status" value="1"/>
</dbReference>
<dbReference type="Pfam" id="PF00215">
    <property type="entry name" value="OMPdecase"/>
    <property type="match status" value="1"/>
</dbReference>
<dbReference type="SMART" id="SM00934">
    <property type="entry name" value="OMPdecase"/>
    <property type="match status" value="1"/>
</dbReference>
<dbReference type="SUPFAM" id="SSF51366">
    <property type="entry name" value="Ribulose-phoshate binding barrel"/>
    <property type="match status" value="1"/>
</dbReference>
<dbReference type="PROSITE" id="PS00156">
    <property type="entry name" value="OMPDECASE"/>
    <property type="match status" value="1"/>
</dbReference>
<evidence type="ECO:0000255" key="1">
    <source>
        <dbReference type="HAMAP-Rule" id="MF_01200"/>
    </source>
</evidence>
<gene>
    <name evidence="1" type="primary">pyrF</name>
    <name type="ordered locus">P9211_13821</name>
</gene>
<sequence length="241" mass="26229">MTLVNPSEKLILALDGMDVLEALSFIDKVPDLIWVKVGLELFATSGLEIFTELRARGKKVFLDLKFHDIPNTMAGACYRAARNGAELITVHACAGSKALLVANEAAKKGAASVGLPSPTLLGVTVLTSWTSYEFGDELDIHHSLEKRVEHLAQLAFKAGLGGCICSPCEVKRLREIFPESFELITPGIRFLDSGLDDQARVMQPRDAFTSGASRLVLGRIITRSTNPAEAFTRVCRDIQTD</sequence>
<accession>A9BBV1</accession>
<feature type="chain" id="PRO_1000138546" description="Orotidine 5'-phosphate decarboxylase">
    <location>
        <begin position="1"/>
        <end position="241"/>
    </location>
</feature>
<feature type="active site" description="Proton donor" evidence="1">
    <location>
        <position position="65"/>
    </location>
</feature>
<feature type="binding site" evidence="1">
    <location>
        <position position="15"/>
    </location>
    <ligand>
        <name>substrate</name>
    </ligand>
</feature>
<feature type="binding site" evidence="1">
    <location>
        <position position="36"/>
    </location>
    <ligand>
        <name>substrate</name>
    </ligand>
</feature>
<feature type="binding site" evidence="1">
    <location>
        <begin position="63"/>
        <end position="72"/>
    </location>
    <ligand>
        <name>substrate</name>
    </ligand>
</feature>
<feature type="binding site" evidence="1">
    <location>
        <position position="127"/>
    </location>
    <ligand>
        <name>substrate</name>
    </ligand>
</feature>
<feature type="binding site" evidence="1">
    <location>
        <position position="189"/>
    </location>
    <ligand>
        <name>substrate</name>
    </ligand>
</feature>
<feature type="binding site" evidence="1">
    <location>
        <position position="198"/>
    </location>
    <ligand>
        <name>substrate</name>
    </ligand>
</feature>
<feature type="binding site" evidence="1">
    <location>
        <position position="218"/>
    </location>
    <ligand>
        <name>substrate</name>
    </ligand>
</feature>
<feature type="binding site" evidence="1">
    <location>
        <position position="219"/>
    </location>
    <ligand>
        <name>substrate</name>
    </ligand>
</feature>
<reference key="1">
    <citation type="journal article" date="2007" name="PLoS Genet.">
        <title>Patterns and implications of gene gain and loss in the evolution of Prochlorococcus.</title>
        <authorList>
            <person name="Kettler G.C."/>
            <person name="Martiny A.C."/>
            <person name="Huang K."/>
            <person name="Zucker J."/>
            <person name="Coleman M.L."/>
            <person name="Rodrigue S."/>
            <person name="Chen F."/>
            <person name="Lapidus A."/>
            <person name="Ferriera S."/>
            <person name="Johnson J."/>
            <person name="Steglich C."/>
            <person name="Church G.M."/>
            <person name="Richardson P."/>
            <person name="Chisholm S.W."/>
        </authorList>
    </citation>
    <scope>NUCLEOTIDE SEQUENCE [LARGE SCALE GENOMIC DNA]</scope>
    <source>
        <strain>MIT 9211</strain>
    </source>
</reference>
<protein>
    <recommendedName>
        <fullName evidence="1">Orotidine 5'-phosphate decarboxylase</fullName>
        <ecNumber evidence="1">4.1.1.23</ecNumber>
    </recommendedName>
    <alternativeName>
        <fullName evidence="1">OMP decarboxylase</fullName>
        <shortName evidence="1">OMPDCase</shortName>
        <shortName evidence="1">OMPdecase</shortName>
    </alternativeName>
</protein>
<organism>
    <name type="scientific">Prochlorococcus marinus (strain MIT 9211)</name>
    <dbReference type="NCBI Taxonomy" id="93059"/>
    <lineage>
        <taxon>Bacteria</taxon>
        <taxon>Bacillati</taxon>
        <taxon>Cyanobacteriota</taxon>
        <taxon>Cyanophyceae</taxon>
        <taxon>Synechococcales</taxon>
        <taxon>Prochlorococcaceae</taxon>
        <taxon>Prochlorococcus</taxon>
    </lineage>
</organism>
<proteinExistence type="inferred from homology"/>
<comment type="function">
    <text evidence="1">Catalyzes the decarboxylation of orotidine 5'-monophosphate (OMP) to uridine 5'-monophosphate (UMP).</text>
</comment>
<comment type="catalytic activity">
    <reaction evidence="1">
        <text>orotidine 5'-phosphate + H(+) = UMP + CO2</text>
        <dbReference type="Rhea" id="RHEA:11596"/>
        <dbReference type="ChEBI" id="CHEBI:15378"/>
        <dbReference type="ChEBI" id="CHEBI:16526"/>
        <dbReference type="ChEBI" id="CHEBI:57538"/>
        <dbReference type="ChEBI" id="CHEBI:57865"/>
        <dbReference type="EC" id="4.1.1.23"/>
    </reaction>
</comment>
<comment type="pathway">
    <text evidence="1">Pyrimidine metabolism; UMP biosynthesis via de novo pathway; UMP from orotate: step 2/2.</text>
</comment>
<comment type="subunit">
    <text evidence="1">Homodimer.</text>
</comment>
<comment type="similarity">
    <text evidence="1">Belongs to the OMP decarboxylase family. Type 1 subfamily.</text>
</comment>